<reference key="1">
    <citation type="submission" date="2007-11" db="EMBL/GenBank/DDBJ databases">
        <title>Complete sequence of chromosome of Shewanella baltica OS195.</title>
        <authorList>
            <consortium name="US DOE Joint Genome Institute"/>
            <person name="Copeland A."/>
            <person name="Lucas S."/>
            <person name="Lapidus A."/>
            <person name="Barry K."/>
            <person name="Glavina del Rio T."/>
            <person name="Dalin E."/>
            <person name="Tice H."/>
            <person name="Pitluck S."/>
            <person name="Chain P."/>
            <person name="Malfatti S."/>
            <person name="Shin M."/>
            <person name="Vergez L."/>
            <person name="Schmutz J."/>
            <person name="Larimer F."/>
            <person name="Land M."/>
            <person name="Hauser L."/>
            <person name="Kyrpides N."/>
            <person name="Kim E."/>
            <person name="Brettar I."/>
            <person name="Rodrigues J."/>
            <person name="Konstantinidis K."/>
            <person name="Klappenbach J."/>
            <person name="Hofle M."/>
            <person name="Tiedje J."/>
            <person name="Richardson P."/>
        </authorList>
    </citation>
    <scope>NUCLEOTIDE SEQUENCE [LARGE SCALE GENOMIC DNA]</scope>
    <source>
        <strain>OS195</strain>
    </source>
</reference>
<organism>
    <name type="scientific">Shewanella baltica (strain OS195)</name>
    <dbReference type="NCBI Taxonomy" id="399599"/>
    <lineage>
        <taxon>Bacteria</taxon>
        <taxon>Pseudomonadati</taxon>
        <taxon>Pseudomonadota</taxon>
        <taxon>Gammaproteobacteria</taxon>
        <taxon>Alteromonadales</taxon>
        <taxon>Shewanellaceae</taxon>
        <taxon>Shewanella</taxon>
    </lineage>
</organism>
<dbReference type="EC" id="7.-.-.-" evidence="1"/>
<dbReference type="EMBL" id="CP000891">
    <property type="protein sequence ID" value="ABX49281.1"/>
    <property type="molecule type" value="Genomic_DNA"/>
</dbReference>
<dbReference type="SMR" id="A9L0K1"/>
<dbReference type="KEGG" id="sbn:Sbal195_2112"/>
<dbReference type="HOGENOM" id="CLU_095255_1_0_6"/>
<dbReference type="Proteomes" id="UP000000770">
    <property type="component" value="Chromosome"/>
</dbReference>
<dbReference type="GO" id="GO:0005886">
    <property type="term" value="C:plasma membrane"/>
    <property type="evidence" value="ECO:0007669"/>
    <property type="project" value="UniProtKB-SubCell"/>
</dbReference>
<dbReference type="GO" id="GO:0022900">
    <property type="term" value="P:electron transport chain"/>
    <property type="evidence" value="ECO:0007669"/>
    <property type="project" value="UniProtKB-UniRule"/>
</dbReference>
<dbReference type="HAMAP" id="MF_00459">
    <property type="entry name" value="RsxA_RnfA"/>
    <property type="match status" value="1"/>
</dbReference>
<dbReference type="InterPro" id="IPR011293">
    <property type="entry name" value="Ion_transpt_RnfA/RsxA"/>
</dbReference>
<dbReference type="InterPro" id="IPR003667">
    <property type="entry name" value="NqrDE/RnfAE"/>
</dbReference>
<dbReference type="InterPro" id="IPR050133">
    <property type="entry name" value="NqrDE/RnfAE_oxidrdctase"/>
</dbReference>
<dbReference type="NCBIfam" id="NF003481">
    <property type="entry name" value="PRK05151.1"/>
    <property type="match status" value="1"/>
</dbReference>
<dbReference type="NCBIfam" id="TIGR01943">
    <property type="entry name" value="rnfA"/>
    <property type="match status" value="1"/>
</dbReference>
<dbReference type="PANTHER" id="PTHR30335">
    <property type="entry name" value="INTEGRAL MEMBRANE PROTEIN OF SOXR-REDUCING COMPLEX"/>
    <property type="match status" value="1"/>
</dbReference>
<dbReference type="PANTHER" id="PTHR30335:SF0">
    <property type="entry name" value="ION-TRANSLOCATING OXIDOREDUCTASE COMPLEX SUBUNIT A"/>
    <property type="match status" value="1"/>
</dbReference>
<dbReference type="Pfam" id="PF02508">
    <property type="entry name" value="Rnf-Nqr"/>
    <property type="match status" value="1"/>
</dbReference>
<dbReference type="PIRSF" id="PIRSF006102">
    <property type="entry name" value="NQR_DE"/>
    <property type="match status" value="1"/>
</dbReference>
<gene>
    <name evidence="1" type="primary">rnfA</name>
    <name type="ordered locus">Sbal195_2112</name>
</gene>
<sequence>MTEYLLLLISTVLVNNFVLVKFLGLCPFMGVSSKLESAIGMSMATTFVLTLASILSYLVNQYLLLPFDLSYLRTMSFILVIAVVVQFTEMVVQKTSAALHRALGIYLPLITTNCAVLGVALLNVNEKHDFIQSAIYGFGAALGFSLVLILFSAMRERLAAADVPLPFKGGAIAMITAGLMSLAFMGFTGLVK</sequence>
<keyword id="KW-0997">Cell inner membrane</keyword>
<keyword id="KW-1003">Cell membrane</keyword>
<keyword id="KW-0249">Electron transport</keyword>
<keyword id="KW-0472">Membrane</keyword>
<keyword id="KW-1278">Translocase</keyword>
<keyword id="KW-0812">Transmembrane</keyword>
<keyword id="KW-1133">Transmembrane helix</keyword>
<keyword id="KW-0813">Transport</keyword>
<comment type="function">
    <text evidence="1">Part of a membrane-bound complex that couples electron transfer with translocation of ions across the membrane.</text>
</comment>
<comment type="subunit">
    <text evidence="1">The complex is composed of six subunits: RnfA, RnfB, RnfC, RnfD, RnfE and RnfG.</text>
</comment>
<comment type="subcellular location">
    <subcellularLocation>
        <location evidence="1">Cell inner membrane</location>
        <topology evidence="1">Multi-pass membrane protein</topology>
    </subcellularLocation>
</comment>
<comment type="similarity">
    <text evidence="1">Belongs to the NqrDE/RnfAE family.</text>
</comment>
<evidence type="ECO:0000255" key="1">
    <source>
        <dbReference type="HAMAP-Rule" id="MF_00459"/>
    </source>
</evidence>
<protein>
    <recommendedName>
        <fullName evidence="1">Ion-translocating oxidoreductase complex subunit A</fullName>
        <ecNumber evidence="1">7.-.-.-</ecNumber>
    </recommendedName>
    <alternativeName>
        <fullName evidence="1">Rnf electron transport complex subunit A</fullName>
    </alternativeName>
</protein>
<accession>A9L0K1</accession>
<proteinExistence type="inferred from homology"/>
<name>RNFA_SHEB9</name>
<feature type="chain" id="PRO_1000081134" description="Ion-translocating oxidoreductase complex subunit A">
    <location>
        <begin position="1"/>
        <end position="192"/>
    </location>
</feature>
<feature type="transmembrane region" description="Helical" evidence="1">
    <location>
        <begin position="5"/>
        <end position="25"/>
    </location>
</feature>
<feature type="transmembrane region" description="Helical" evidence="1">
    <location>
        <begin position="39"/>
        <end position="59"/>
    </location>
</feature>
<feature type="transmembrane region" description="Helical" evidence="1">
    <location>
        <begin position="65"/>
        <end position="85"/>
    </location>
</feature>
<feature type="transmembrane region" description="Helical" evidence="1">
    <location>
        <begin position="102"/>
        <end position="122"/>
    </location>
</feature>
<feature type="transmembrane region" description="Helical" evidence="1">
    <location>
        <begin position="134"/>
        <end position="154"/>
    </location>
</feature>
<feature type="transmembrane region" description="Helical" evidence="1">
    <location>
        <begin position="171"/>
        <end position="191"/>
    </location>
</feature>